<reference key="1">
    <citation type="journal article" date="2003" name="Proc. Natl. Acad. Sci. U.S.A.">
        <title>The complete genome sequence of Mycobacterium bovis.</title>
        <authorList>
            <person name="Garnier T."/>
            <person name="Eiglmeier K."/>
            <person name="Camus J.-C."/>
            <person name="Medina N."/>
            <person name="Mansoor H."/>
            <person name="Pryor M."/>
            <person name="Duthoy S."/>
            <person name="Grondin S."/>
            <person name="Lacroix C."/>
            <person name="Monsempe C."/>
            <person name="Simon S."/>
            <person name="Harris B."/>
            <person name="Atkin R."/>
            <person name="Doggett J."/>
            <person name="Mayes R."/>
            <person name="Keating L."/>
            <person name="Wheeler P.R."/>
            <person name="Parkhill J."/>
            <person name="Barrell B.G."/>
            <person name="Cole S.T."/>
            <person name="Gordon S.V."/>
            <person name="Hewinson R.G."/>
        </authorList>
    </citation>
    <scope>NUCLEOTIDE SEQUENCE [LARGE SCALE GENOMIC DNA]</scope>
    <source>
        <strain>ATCC BAA-935 / AF2122/97</strain>
    </source>
</reference>
<reference key="2">
    <citation type="journal article" date="2017" name="Genome Announc.">
        <title>Updated reference genome sequence and annotation of Mycobacterium bovis AF2122/97.</title>
        <authorList>
            <person name="Malone K.M."/>
            <person name="Farrell D."/>
            <person name="Stuber T.P."/>
            <person name="Schubert O.T."/>
            <person name="Aebersold R."/>
            <person name="Robbe-Austerman S."/>
            <person name="Gordon S.V."/>
        </authorList>
    </citation>
    <scope>NUCLEOTIDE SEQUENCE [LARGE SCALE GENOMIC DNA]</scope>
    <scope>GENOME REANNOTATION</scope>
    <source>
        <strain>ATCC BAA-935 / AF2122/97</strain>
    </source>
</reference>
<organism>
    <name type="scientific">Mycobacterium bovis (strain ATCC BAA-935 / AF2122/97)</name>
    <dbReference type="NCBI Taxonomy" id="233413"/>
    <lineage>
        <taxon>Bacteria</taxon>
        <taxon>Bacillati</taxon>
        <taxon>Actinomycetota</taxon>
        <taxon>Actinomycetes</taxon>
        <taxon>Mycobacteriales</taxon>
        <taxon>Mycobacteriaceae</taxon>
        <taxon>Mycobacterium</taxon>
        <taxon>Mycobacterium tuberculosis complex</taxon>
    </lineage>
</organism>
<dbReference type="EC" id="2.7.6.3" evidence="1"/>
<dbReference type="EMBL" id="LT708304">
    <property type="protein sequence ID" value="SIU02264.1"/>
    <property type="molecule type" value="Genomic_DNA"/>
</dbReference>
<dbReference type="RefSeq" id="NP_857275.1">
    <property type="nucleotide sequence ID" value="NC_002945.3"/>
</dbReference>
<dbReference type="RefSeq" id="WP_003419536.1">
    <property type="nucleotide sequence ID" value="NC_002945.4"/>
</dbReference>
<dbReference type="SMR" id="P64144"/>
<dbReference type="GeneID" id="45427592"/>
<dbReference type="KEGG" id="mbo:BQ2027_MB3636C"/>
<dbReference type="PATRIC" id="fig|233413.5.peg.3982"/>
<dbReference type="UniPathway" id="UPA00077">
    <property type="reaction ID" value="UER00155"/>
</dbReference>
<dbReference type="Proteomes" id="UP000001419">
    <property type="component" value="Chromosome"/>
</dbReference>
<dbReference type="GO" id="GO:0003848">
    <property type="term" value="F:2-amino-4-hydroxy-6-hydroxymethyldihydropteridine diphosphokinase activity"/>
    <property type="evidence" value="ECO:0007669"/>
    <property type="project" value="UniProtKB-EC"/>
</dbReference>
<dbReference type="GO" id="GO:0005524">
    <property type="term" value="F:ATP binding"/>
    <property type="evidence" value="ECO:0007669"/>
    <property type="project" value="UniProtKB-KW"/>
</dbReference>
<dbReference type="GO" id="GO:0016301">
    <property type="term" value="F:kinase activity"/>
    <property type="evidence" value="ECO:0007669"/>
    <property type="project" value="UniProtKB-KW"/>
</dbReference>
<dbReference type="GO" id="GO:0046656">
    <property type="term" value="P:folic acid biosynthetic process"/>
    <property type="evidence" value="ECO:0007669"/>
    <property type="project" value="UniProtKB-KW"/>
</dbReference>
<dbReference type="GO" id="GO:0046654">
    <property type="term" value="P:tetrahydrofolate biosynthetic process"/>
    <property type="evidence" value="ECO:0007669"/>
    <property type="project" value="UniProtKB-UniPathway"/>
</dbReference>
<dbReference type="CDD" id="cd00483">
    <property type="entry name" value="HPPK"/>
    <property type="match status" value="1"/>
</dbReference>
<dbReference type="Gene3D" id="3.30.70.560">
    <property type="entry name" value="7,8-Dihydro-6-hydroxymethylpterin-pyrophosphokinase HPPK"/>
    <property type="match status" value="1"/>
</dbReference>
<dbReference type="InterPro" id="IPR000550">
    <property type="entry name" value="Hppk"/>
</dbReference>
<dbReference type="InterPro" id="IPR035907">
    <property type="entry name" value="Hppk_sf"/>
</dbReference>
<dbReference type="NCBIfam" id="TIGR01498">
    <property type="entry name" value="folK"/>
    <property type="match status" value="1"/>
</dbReference>
<dbReference type="PANTHER" id="PTHR43071">
    <property type="entry name" value="2-AMINO-4-HYDROXY-6-HYDROXYMETHYLDIHYDROPTERIDINE PYROPHOSPHOKINASE"/>
    <property type="match status" value="1"/>
</dbReference>
<dbReference type="PANTHER" id="PTHR43071:SF1">
    <property type="entry name" value="2-AMINO-4-HYDROXY-6-HYDROXYMETHYLDIHYDROPTERIDINE PYROPHOSPHOKINASE"/>
    <property type="match status" value="1"/>
</dbReference>
<dbReference type="Pfam" id="PF01288">
    <property type="entry name" value="HPPK"/>
    <property type="match status" value="1"/>
</dbReference>
<dbReference type="SUPFAM" id="SSF55083">
    <property type="entry name" value="6-hydroxymethyl-7,8-dihydropterin pyrophosphokinase, HPPK"/>
    <property type="match status" value="1"/>
</dbReference>
<dbReference type="PROSITE" id="PS00794">
    <property type="entry name" value="HPPK"/>
    <property type="match status" value="1"/>
</dbReference>
<accession>P64144</accession>
<accession>A0A1R3Y4N8</accession>
<accession>O06276</accession>
<accession>X2BNQ7</accession>
<comment type="function">
    <text evidence="1">Catalyzes the transfer of pyrophosphate from adenosine triphosphate (ATP) to 6-hydroxymethyl-7,8-dihydropterin, an enzymatic step in folate biosynthesis pathway.</text>
</comment>
<comment type="catalytic activity">
    <reaction evidence="1">
        <text>6-hydroxymethyl-7,8-dihydropterin + ATP = (7,8-dihydropterin-6-yl)methyl diphosphate + AMP + H(+)</text>
        <dbReference type="Rhea" id="RHEA:11412"/>
        <dbReference type="ChEBI" id="CHEBI:15378"/>
        <dbReference type="ChEBI" id="CHEBI:30616"/>
        <dbReference type="ChEBI" id="CHEBI:44841"/>
        <dbReference type="ChEBI" id="CHEBI:72950"/>
        <dbReference type="ChEBI" id="CHEBI:456215"/>
        <dbReference type="EC" id="2.7.6.3"/>
    </reaction>
</comment>
<comment type="pathway">
    <text evidence="1">Cofactor biosynthesis; tetrahydrofolate biosynthesis; 2-amino-4-hydroxy-6-hydroxymethyl-7,8-dihydropteridine diphosphate from 7,8-dihydroneopterin triphosphate: step 4/4.</text>
</comment>
<comment type="similarity">
    <text evidence="2">Belongs to the HPPK family.</text>
</comment>
<protein>
    <recommendedName>
        <fullName evidence="1">2-amino-4-hydroxy-6-hydroxymethyldihydropteridine pyrophosphokinase</fullName>
        <ecNumber evidence="1">2.7.6.3</ecNumber>
    </recommendedName>
    <alternativeName>
        <fullName evidence="1">6-hydroxymethyl-7,8-dihydropterin pyrophosphokinase</fullName>
        <shortName evidence="1">PPPK</shortName>
    </alternativeName>
    <alternativeName>
        <fullName evidence="1">7,8-dihydro-6-hydroxymethylpterin-pyrophosphokinase</fullName>
        <shortName evidence="1">HPPK</shortName>
    </alternativeName>
</protein>
<gene>
    <name type="primary">folK</name>
    <name type="ordered locus">BQ2027_MB3636C</name>
</gene>
<keyword id="KW-0067">ATP-binding</keyword>
<keyword id="KW-0289">Folate biosynthesis</keyword>
<keyword id="KW-0418">Kinase</keyword>
<keyword id="KW-0547">Nucleotide-binding</keyword>
<keyword id="KW-1185">Reference proteome</keyword>
<keyword id="KW-0808">Transferase</keyword>
<sequence>MTRVVLSVGSNLGDRLARLRSVADGLGDALIAASPIYEADPWGGVEQGQFLNAVLIADDPTCEPREWLRRAQEFERAAGRVRGQRWGPRNLDVDLIACYQTSATEALVEVTARENHLTLPHPLAHLRAFVLIPWIAVDPTAQLTVAGCPRPVTRLLAELEPADRDSVRLFRPSFDLNSRHPVSRAPES</sequence>
<feature type="chain" id="PRO_0000168256" description="2-amino-4-hydroxy-6-hydroxymethyldihydropteridine pyrophosphokinase">
    <location>
        <begin position="1"/>
        <end position="188"/>
    </location>
</feature>
<proteinExistence type="inferred from homology"/>
<name>HPPK_MYCBO</name>
<evidence type="ECO:0000250" key="1">
    <source>
        <dbReference type="UniProtKB" id="P26281"/>
    </source>
</evidence>
<evidence type="ECO:0000305" key="2"/>